<name>CHS5_EXODN</name>
<gene>
    <name evidence="12" type="primary">CHS5</name>
    <name type="ORF">HMPREF1120_08776</name>
</gene>
<sequence length="1885" mass="208881">MATRGNVPAHMQASLPALPAHLQSDTHITAHLASRFHVSLPTARLSSQGLICLNTFTSSTRGPNGDKEGSAMGEAEDLARRAWARLGNRAEDQAFVFFGESGSGKTTVRSHLLSSFLSFSSTPLSSKLSLAAFVFDTLTTTKTTTTQTASKAGLFYELQYDASSNNPTLIGGKLLDHRLERSRISHVPTGERSFHVLYYLLAGTSAAEKSHLGLDGHVNITTAGTGLSRSASVSHKRWRYLGHPTQMKVGINDAEGFQHFKNALRKLEFPRTEIAEICQVLAAILHIGQLEFGTGQATLTAAEESGGYSHEGGETVTVVKNRDTLAIVAAFLGLGVQDLEESLRYKTRTIHRERVTVMLDTKGARENADELATTLYSLLVTYIIESINQRVCAAEDSVANTISIVDFPGFADHSSTGSVLDQLLNNAANESLYNTCLHSIFEKTAEMLESEEVSVPATSYFDNSDAVRGLLKHGNGLLAILDDQTRRGRTDVQFLESLRKRFENKNKAITVGSATSTMPGSNFATTNLAASFTVRHYAGEVDYPVHSLVEENGDVVSGDLMNMIKATKSDFVANLFGQEALNTVSHPAEKTAIVQAQVSSKPLRMPSVSRKKHDQLRRMASRRADRSPAPQEEEPLPGTEEAKVRRTKPTATGLTQGAAAQFLSALDNITKSLTAPNVNNYFVFCLKPNDRRIANQFDSKCVRQQVQMFGIAEISQRLRTADFTIFLPFGEFLGLTDADGGVVGSDREKAQLVLDSKHWPPNEARIGNTGVFLSERCWASIALTGSQAAAYFGGDIGSPSRPDTPGHNPFSDSKARLVGSADGTPGSFYGDEAKGGGYFGSRELDAKSDAGASAFHSGDMFRNLETKEELAEKGNKKKVEEVDVVPVSSSRKRWLAIVYFLTWYLPDFAIKWIGGMKRKDVRTAWREKFAINLLIWLSCGLVVFFIIVFPELICPKQNVYSAAELSAHDGKGKHSAYVAIRGQVFDLGAFMPNHYPKIIPQSSLKKYAGVDATGLFPVQVSALCQGKDGRVDPTVQLDYTATNISGTAAVISSTDANRKYHDFRYFTNDSRPDWFYEQMIMLKANYRKGSIGYTPQYVKTLAKKSKSIAILNDRVYDFTTYNEGGRSVRAPPGEEVPSGVDTDFMDSLVVDLFTQRAGHDVTKYWNALPLDPGLRSRMQLCLDNLFFVGVTDTRNSPRCLFARYILLAVSILLCSVIGFKFFAALQFGGKNVPENLDKFVICQVPAYTEDEDSLRRAIDSAARMRYDDKRKLLIVVCDGMIIGQGNDRPTPRIVLDILGVSETVDPEPLSFESLGEGMKQHNMGKVYSGLYEVQGHIVPFMVVVKVGKPSEVSRPGNRGKRDSQMVIMRFLHRVHYNLPMSPLELEMHHQIRNIIGVNPTFYEFMLQIDADTVVAPDSATRMVSAFLRDTRLIGVCGETSLSNAKSSFITMMQVYEYYISHNLTKAFESLFGSVTCLPGCFTMYRIRAAETGKPLFVSKEIIQDYSEIRVDTLHMKNLLHLGEDRYLTTLLLKYHSKYKTKYIFHAHAWTIAPDSWKVFMSQRRRWINSTVHNLIELIPLQQLCGFCCFSMRFVVFLDLLSTVVAPVTVAYIAYLIVLLATESDVVPLTAFILLGAIYGLQAIIFILRRKWEMIGWMIVYILAMPVFSLGLPLYAFWHMDDFSWGNTRLVRGEHGKQILLSDEGKFGPDSIPKKKWEEYQAELWDAQTQRDDARSELSGYSYGTKSYLPTGSVYGGGYNDTQHLMMAPSRSASQLDMHPTPMYGGGGGHNQSRMSLAPSEMLGSQSNLMMPSGRSVADMEMSDLTGLPTDDMLLNEIRDILRTADLMTVTKKGIKQELERRFNVNLDMKRAYIGSATEAILSGQL</sequence>
<reference key="1">
    <citation type="submission" date="2011-07" db="EMBL/GenBank/DDBJ databases">
        <title>The Genome Sequence of Exophiala (Wangiella) dermatitidis NIH/UT8656.</title>
        <authorList>
            <consortium name="The Broad Institute Genome Sequencing Platform"/>
            <person name="Cuomo C."/>
            <person name="Wang Z."/>
            <person name="Hunicke-Smith S."/>
            <person name="Szanislo P.J."/>
            <person name="Earl A."/>
            <person name="Young S.K."/>
            <person name="Zeng Q."/>
            <person name="Gargeya S."/>
            <person name="Fitzgerald M."/>
            <person name="Haas B."/>
            <person name="Abouelleil A."/>
            <person name="Alvarado L."/>
            <person name="Arachchi H.M."/>
            <person name="Berlin A."/>
            <person name="Brown A."/>
            <person name="Chapman S.B."/>
            <person name="Chen Z."/>
            <person name="Dunbar C."/>
            <person name="Freedman E."/>
            <person name="Gearin G."/>
            <person name="Gellesch M."/>
            <person name="Goldberg J."/>
            <person name="Griggs A."/>
            <person name="Gujja S."/>
            <person name="Heiman D."/>
            <person name="Howarth C."/>
            <person name="Larson L."/>
            <person name="Lui A."/>
            <person name="MacDonald P.J.P."/>
            <person name="Montmayeur A."/>
            <person name="Murphy C."/>
            <person name="Neiman D."/>
            <person name="Pearson M."/>
            <person name="Priest M."/>
            <person name="Roberts A."/>
            <person name="Saif S."/>
            <person name="Shea T."/>
            <person name="Shenoy N."/>
            <person name="Sisk P."/>
            <person name="Stolte C."/>
            <person name="Sykes S."/>
            <person name="Wortman J."/>
            <person name="Nusbaum C."/>
            <person name="Birren B."/>
        </authorList>
    </citation>
    <scope>NUCLEOTIDE SEQUENCE [LARGE SCALE GENOMIC DNA]</scope>
    <source>
        <strain>ATCC 34100 / CBS 525.76 / NIH/UT8656</strain>
    </source>
</reference>
<reference key="2">
    <citation type="journal article" date="2002" name="Microbiology">
        <title>Compensatory expression of five chitin synthase genes, a response to stress stimuli, in Wangiella (Exophiala) dermatitidis, a melanized fungal pathogen of humans.</title>
        <authorList>
            <person name="Wang Q."/>
            <person name="Liu H."/>
            <person name="Szaniszlo P.J."/>
        </authorList>
    </citation>
    <scope>INDUCTION</scope>
    <scope>DISRUPTION PHENOTYPE</scope>
</reference>
<reference key="3">
    <citation type="journal article" date="2004" name="Eukaryot. Cell">
        <title>Wangiella (Exophiala) dermatitidis WdChs5p, a class V chitin synthase, is essential for sustained cell growth at temperature of infection.</title>
        <authorList>
            <person name="Liu H."/>
            <person name="Kauffman S."/>
            <person name="Becker J.M."/>
            <person name="Szaniszlo P.J."/>
        </authorList>
    </citation>
    <scope>INDUCTION</scope>
    <scope>FUNCTION</scope>
    <scope>DISRUPTION PHENOTYPE</scope>
</reference>
<reference key="4">
    <citation type="journal article" date="2007" name="FEMS Microbiol. Lett.">
        <title>Transcription and expression analyses of WdCHS5, which encodes a class V chitin synthase with a myosin motor-like domain in Wangiella (Exophiala) dermatitidis.</title>
        <authorList>
            <person name="Liu H."/>
            <person name="Szaniszlo P.J."/>
        </authorList>
    </citation>
    <scope>INDUCTION</scope>
</reference>
<reference key="5">
    <citation type="journal article" date="2009" name="Prep. Biochem. Biotechnol.">
        <title>Immunoaffinity purification of the class V chitin synthase of Wangiella (Exophiala) dermatitidis.</title>
        <authorList>
            <person name="Abramczyk D."/>
            <person name="Szaniszlo P.J."/>
        </authorList>
    </citation>
    <scope>SUBCELLULAR LOCATION</scope>
    <scope>CATALYTIC ACTIVITY</scope>
    <scope>ZYMOGEN</scope>
</reference>
<reference key="6">
    <citation type="journal article" date="2009" name="Fungal Genet. Biol.">
        <title>Cytolocalization of the class V chitin synthase in the yeast, hyphal and sclerotic morphotypes of Wangiella (Exophiala) dermatitidis.</title>
        <authorList>
            <person name="Abramczyk D."/>
            <person name="Park C."/>
            <person name="Szaniszlo P.J."/>
        </authorList>
    </citation>
    <scope>FUNCTION</scope>
    <scope>SUBCELLULAR LOCATION</scope>
    <scope>DOMAIN</scope>
</reference>
<keyword id="KW-0009">Actin-binding</keyword>
<keyword id="KW-0067">ATP-binding</keyword>
<keyword id="KW-1003">Cell membrane</keyword>
<keyword id="KW-0325">Glycoprotein</keyword>
<keyword id="KW-0328">Glycosyltransferase</keyword>
<keyword id="KW-0472">Membrane</keyword>
<keyword id="KW-0505">Motor protein</keyword>
<keyword id="KW-0518">Myosin</keyword>
<keyword id="KW-0547">Nucleotide-binding</keyword>
<keyword id="KW-1185">Reference proteome</keyword>
<keyword id="KW-0808">Transferase</keyword>
<keyword id="KW-0812">Transmembrane</keyword>
<keyword id="KW-1133">Transmembrane helix</keyword>
<keyword id="KW-0843">Virulence</keyword>
<keyword id="KW-0865">Zymogen</keyword>
<evidence type="ECO:0000255" key="1"/>
<evidence type="ECO:0000255" key="2">
    <source>
        <dbReference type="PROSITE-ProRule" id="PRU00279"/>
    </source>
</evidence>
<evidence type="ECO:0000255" key="3">
    <source>
        <dbReference type="PROSITE-ProRule" id="PRU00498"/>
    </source>
</evidence>
<evidence type="ECO:0000255" key="4">
    <source>
        <dbReference type="PROSITE-ProRule" id="PRU00782"/>
    </source>
</evidence>
<evidence type="ECO:0000255" key="5">
    <source>
        <dbReference type="PROSITE-ProRule" id="PRU01342"/>
    </source>
</evidence>
<evidence type="ECO:0000256" key="6">
    <source>
        <dbReference type="SAM" id="MobiDB-lite"/>
    </source>
</evidence>
<evidence type="ECO:0000269" key="7">
    <source>
    </source>
</evidence>
<evidence type="ECO:0000269" key="8">
    <source>
    </source>
</evidence>
<evidence type="ECO:0000269" key="9">
    <source>
    </source>
</evidence>
<evidence type="ECO:0000269" key="10">
    <source>
    </source>
</evidence>
<evidence type="ECO:0000269" key="11">
    <source>
    </source>
</evidence>
<evidence type="ECO:0000303" key="12">
    <source>
    </source>
</evidence>
<evidence type="ECO:0000305" key="13"/>
<feature type="chain" id="PRO_0000460791" description="Chitin synthase 5">
    <location>
        <begin position="1"/>
        <end position="1885"/>
    </location>
</feature>
<feature type="transmembrane region" description="Helical" evidence="1">
    <location>
        <begin position="894"/>
        <end position="914"/>
    </location>
</feature>
<feature type="transmembrane region" description="Helical" evidence="1">
    <location>
        <begin position="929"/>
        <end position="949"/>
    </location>
</feature>
<feature type="transmembrane region" description="Helical" evidence="1">
    <location>
        <begin position="1205"/>
        <end position="1225"/>
    </location>
</feature>
<feature type="transmembrane region" description="Helical" evidence="1">
    <location>
        <begin position="1599"/>
        <end position="1619"/>
    </location>
</feature>
<feature type="transmembrane region" description="Helical" evidence="1">
    <location>
        <begin position="1626"/>
        <end position="1646"/>
    </location>
</feature>
<feature type="transmembrane region" description="Helical" evidence="1">
    <location>
        <begin position="1653"/>
        <end position="1673"/>
    </location>
</feature>
<feature type="domain" description="Myosin motor" evidence="4">
    <location>
        <begin position="1"/>
        <end position="789"/>
    </location>
</feature>
<feature type="domain" description="Cytochrome b5 heme-binding" evidence="2">
    <location>
        <begin position="957"/>
        <end position="1016"/>
    </location>
</feature>
<feature type="domain" description="DEK-C" evidence="5">
    <location>
        <begin position="1827"/>
        <end position="1882"/>
    </location>
</feature>
<feature type="region of interest" description="Disordered" evidence="6">
    <location>
        <begin position="601"/>
        <end position="649"/>
    </location>
</feature>
<feature type="region of interest" description="Actin-binding" evidence="4">
    <location>
        <begin position="666"/>
        <end position="690"/>
    </location>
</feature>
<feature type="region of interest" description="Disordered" evidence="6">
    <location>
        <begin position="794"/>
        <end position="817"/>
    </location>
</feature>
<feature type="compositionally biased region" description="Basic residues" evidence="6">
    <location>
        <begin position="609"/>
        <end position="621"/>
    </location>
</feature>
<feature type="binding site" evidence="4">
    <location>
        <begin position="99"/>
        <end position="106"/>
    </location>
    <ligand>
        <name>ATP</name>
        <dbReference type="ChEBI" id="CHEBI:30616"/>
    </ligand>
</feature>
<feature type="glycosylation site" description="N-linked (GlcNAc...) asparagine" evidence="3">
    <location>
        <position position="219"/>
    </location>
</feature>
<feature type="glycosylation site" description="N-linked (GlcNAc...) asparagine" evidence="3">
    <location>
        <position position="429"/>
    </location>
</feature>
<feature type="glycosylation site" description="N-linked (GlcNAc...) asparagine" evidence="3">
    <location>
        <position position="668"/>
    </location>
</feature>
<feature type="glycosylation site" description="N-linked (GlcNAc...) asparagine" evidence="3">
    <location>
        <position position="1043"/>
    </location>
</feature>
<feature type="glycosylation site" description="N-linked (GlcNAc...) asparagine" evidence="3">
    <location>
        <position position="1068"/>
    </location>
</feature>
<feature type="glycosylation site" description="N-linked (GlcNAc...) asparagine" evidence="3">
    <location>
        <position position="1462"/>
    </location>
</feature>
<feature type="glycosylation site" description="N-linked (GlcNAc...) asparagine" evidence="3">
    <location>
        <position position="1568"/>
    </location>
</feature>
<feature type="glycosylation site" description="N-linked (GlcNAc...) asparagine" evidence="3">
    <location>
        <position position="1759"/>
    </location>
</feature>
<feature type="glycosylation site" description="N-linked (GlcNAc...) asparagine" evidence="3">
    <location>
        <position position="1790"/>
    </location>
</feature>
<comment type="function">
    <text evidence="8 10 11">Polymerizes chitin, a structural polymer of the cell wall and septum, by transferring the sugar moiety of UDP-GlcNAc to the non-reducing end of the growing chitin polymer (PubMed:19431044). CHS5 is required for the sustained growth at 37 degrees Celsius and is of critical importance for virulence (PubMed:14871935, PubMed:18992354). Especially important at infection temperatures for maintaining the cell wall integrity of developing yeast buds, elongating tips of hyphae, and random sites of expansion in sclerotic forms (PubMed:18992354).</text>
</comment>
<comment type="catalytic activity">
    <reaction evidence="10 11">
        <text>[(1-&gt;4)-N-acetyl-beta-D-glucosaminyl](n) + UDP-N-acetyl-alpha-D-glucosamine = [(1-&gt;4)-N-acetyl-beta-D-glucosaminyl](n+1) + UDP + H(+)</text>
        <dbReference type="Rhea" id="RHEA:16637"/>
        <dbReference type="Rhea" id="RHEA-COMP:9593"/>
        <dbReference type="Rhea" id="RHEA-COMP:9595"/>
        <dbReference type="ChEBI" id="CHEBI:15378"/>
        <dbReference type="ChEBI" id="CHEBI:17029"/>
        <dbReference type="ChEBI" id="CHEBI:57705"/>
        <dbReference type="ChEBI" id="CHEBI:58223"/>
        <dbReference type="EC" id="2.4.1.16"/>
    </reaction>
    <physiologicalReaction direction="left-to-right" evidence="10 11">
        <dbReference type="Rhea" id="RHEA:16638"/>
    </physiologicalReaction>
</comment>
<comment type="subcellular location">
    <subcellularLocation>
        <location evidence="10 11">Cell membrane</location>
        <topology>Multi-pass membrane protein</topology>
    </subcellularLocation>
    <subcellularLocation>
        <location evidence="1">Membrane</location>
    </subcellularLocation>
    <text evidence="10">Localizes to the regions of cell wall growth in an actin-dependent fashion.</text>
</comment>
<comment type="induction">
    <text evidence="7 8 9">The expression level increases quickly and almost doubles when cells were shifted to 37 degrees Celsius, compared to cells maintained at 25 degrees Celsius (PubMed:12213927, PubMed:14871935, PubMed:17937668). Expression is also increased under additional stress conditions that are known to initiate development of the sclerotic morphology (acidic conditions or Ca(2+) limitation induced by EGTA) or of hyphae (induced by nitrogen limitation) (PubMed:14871935). At least one negative regulator binding sequence exists in the promoter between -880 and -680 bp and another regulatory binding site is localized between bp -680 and -450 bp (PubMed:14871935).</text>
</comment>
<comment type="domain">
    <text evidence="10">Contains an N-terminal myosin motor-like domain with a P-loop (MMD) that is involved in the actin-dependent localization to the regions of cell wall growth.</text>
</comment>
<comment type="PTM">
    <text evidence="11">Maximal activity requires trypsin activation, suggesting a zymogenic nature.</text>
</comment>
<comment type="disruption phenotype">
    <text evidence="7 8">Leads to hyperpigmentation and loss of viability in stationary phase at 37 degrees Celsius (PubMed:14871935). Reduces the virulence in a mouse model of acute infection (PubMed:14871935). Causes cell wall integrity defects and subsequent abnormal yeast morphology at 37 degrees Celsius (PubMed:14871935). Does dot lead to compensation by increased expression of another chitin synthase genes (PubMed:12213927).</text>
</comment>
<comment type="similarity">
    <text evidence="13">In the N-terminal section; belongs to the TRAFAC class myosin-kinesin ATPase superfamily. Myosin family.</text>
</comment>
<comment type="similarity">
    <text evidence="13">In the C-terminal section; belongs to the chitin synthase family. Class V subfamily.</text>
</comment>
<accession>H6CAN5</accession>
<protein>
    <recommendedName>
        <fullName evidence="12">Chitin synthase 5</fullName>
        <ecNumber evidence="10 11">2.4.1.16</ecNumber>
    </recommendedName>
    <alternativeName>
        <fullName evidence="13">Chitin-UDP acetyl-glucosaminyl transferase 5</fullName>
    </alternativeName>
    <alternativeName>
        <fullName evidence="12">Class-V chitin synthase 5</fullName>
    </alternativeName>
</protein>
<dbReference type="EC" id="2.4.1.16" evidence="10 11"/>
<dbReference type="EMBL" id="JH226137">
    <property type="protein sequence ID" value="EHY60832.1"/>
    <property type="molecule type" value="Genomic_DNA"/>
</dbReference>
<dbReference type="RefSeq" id="XP_009161293.1">
    <property type="nucleotide sequence ID" value="XM_009163045.1"/>
</dbReference>
<dbReference type="SMR" id="H6CAN5"/>
<dbReference type="STRING" id="858893.H6CAN5"/>
<dbReference type="GeneID" id="20313415"/>
<dbReference type="VEuPathDB" id="FungiDB:HMPREF1120_08776"/>
<dbReference type="eggNOG" id="KOG2571">
    <property type="taxonomic scope" value="Eukaryota"/>
</dbReference>
<dbReference type="eggNOG" id="KOG4229">
    <property type="taxonomic scope" value="Eukaryota"/>
</dbReference>
<dbReference type="HOGENOM" id="CLU_000192_0_2_1"/>
<dbReference type="InParanoid" id="H6CAN5"/>
<dbReference type="OMA" id="LEMHHQI"/>
<dbReference type="OrthoDB" id="2659at5583"/>
<dbReference type="Proteomes" id="UP000007304">
    <property type="component" value="Unassembled WGS sequence"/>
</dbReference>
<dbReference type="GO" id="GO:0030428">
    <property type="term" value="C:cell septum"/>
    <property type="evidence" value="ECO:0007669"/>
    <property type="project" value="TreeGrafter"/>
</dbReference>
<dbReference type="GO" id="GO:0016459">
    <property type="term" value="C:myosin complex"/>
    <property type="evidence" value="ECO:0007669"/>
    <property type="project" value="UniProtKB-KW"/>
</dbReference>
<dbReference type="GO" id="GO:0005886">
    <property type="term" value="C:plasma membrane"/>
    <property type="evidence" value="ECO:0007669"/>
    <property type="project" value="UniProtKB-SubCell"/>
</dbReference>
<dbReference type="GO" id="GO:0003779">
    <property type="term" value="F:actin binding"/>
    <property type="evidence" value="ECO:0007669"/>
    <property type="project" value="UniProtKB-KW"/>
</dbReference>
<dbReference type="GO" id="GO:0005524">
    <property type="term" value="F:ATP binding"/>
    <property type="evidence" value="ECO:0007669"/>
    <property type="project" value="UniProtKB-KW"/>
</dbReference>
<dbReference type="GO" id="GO:0004100">
    <property type="term" value="F:chitin synthase activity"/>
    <property type="evidence" value="ECO:0007669"/>
    <property type="project" value="UniProtKB-EC"/>
</dbReference>
<dbReference type="GO" id="GO:0003774">
    <property type="term" value="F:cytoskeletal motor activity"/>
    <property type="evidence" value="ECO:0007669"/>
    <property type="project" value="InterPro"/>
</dbReference>
<dbReference type="GO" id="GO:0006031">
    <property type="term" value="P:chitin biosynthetic process"/>
    <property type="evidence" value="ECO:0007669"/>
    <property type="project" value="TreeGrafter"/>
</dbReference>
<dbReference type="GO" id="GO:0031505">
    <property type="term" value="P:fungal-type cell wall organization"/>
    <property type="evidence" value="ECO:0007669"/>
    <property type="project" value="TreeGrafter"/>
</dbReference>
<dbReference type="CDD" id="cd14879">
    <property type="entry name" value="MYSc_Myo17"/>
    <property type="match status" value="1"/>
</dbReference>
<dbReference type="FunFam" id="1.10.10.60:FF:000337">
    <property type="entry name" value="Chitin synthase 8"/>
    <property type="match status" value="1"/>
</dbReference>
<dbReference type="FunFam" id="1.10.10.820:FF:000012">
    <property type="entry name" value="Chitin synthase ChsE"/>
    <property type="match status" value="1"/>
</dbReference>
<dbReference type="FunFam" id="1.20.58.530:FF:000017">
    <property type="entry name" value="Chitin synthase ChsE"/>
    <property type="match status" value="1"/>
</dbReference>
<dbReference type="FunFam" id="3.10.120.10:FF:000019">
    <property type="entry name" value="Chitin synthase ChsE"/>
    <property type="match status" value="1"/>
</dbReference>
<dbReference type="FunFam" id="3.40.850.10:FF:000055">
    <property type="entry name" value="Chitin synthase ChsE"/>
    <property type="match status" value="1"/>
</dbReference>
<dbReference type="Gene3D" id="1.10.10.820">
    <property type="match status" value="1"/>
</dbReference>
<dbReference type="Gene3D" id="1.20.58.530">
    <property type="match status" value="1"/>
</dbReference>
<dbReference type="Gene3D" id="3.10.120.10">
    <property type="entry name" value="Cytochrome b5-like heme/steroid binding domain"/>
    <property type="match status" value="1"/>
</dbReference>
<dbReference type="Gene3D" id="1.10.10.60">
    <property type="entry name" value="Homeodomain-like"/>
    <property type="match status" value="1"/>
</dbReference>
<dbReference type="Gene3D" id="3.40.850.10">
    <property type="entry name" value="Kinesin motor domain"/>
    <property type="match status" value="1"/>
</dbReference>
<dbReference type="Gene3D" id="1.20.120.720">
    <property type="entry name" value="Myosin VI head, motor domain, U50 subdomain"/>
    <property type="match status" value="1"/>
</dbReference>
<dbReference type="Gene3D" id="3.90.550.10">
    <property type="entry name" value="Spore Coat Polysaccharide Biosynthesis Protein SpsA, Chain A"/>
    <property type="match status" value="1"/>
</dbReference>
<dbReference type="InterPro" id="IPR004835">
    <property type="entry name" value="Chitin_synth"/>
</dbReference>
<dbReference type="InterPro" id="IPR001199">
    <property type="entry name" value="Cyt_B5-like_heme/steroid-bd"/>
</dbReference>
<dbReference type="InterPro" id="IPR036400">
    <property type="entry name" value="Cyt_B5-like_heme/steroid_sf"/>
</dbReference>
<dbReference type="InterPro" id="IPR014876">
    <property type="entry name" value="DEK_C"/>
</dbReference>
<dbReference type="InterPro" id="IPR036961">
    <property type="entry name" value="Kinesin_motor_dom_sf"/>
</dbReference>
<dbReference type="InterPro" id="IPR001609">
    <property type="entry name" value="Myosin_head_motor_dom-like"/>
</dbReference>
<dbReference type="InterPro" id="IPR036037">
    <property type="entry name" value="MYSc_Myo17"/>
</dbReference>
<dbReference type="InterPro" id="IPR029044">
    <property type="entry name" value="Nucleotide-diphossugar_trans"/>
</dbReference>
<dbReference type="InterPro" id="IPR027417">
    <property type="entry name" value="P-loop_NTPase"/>
</dbReference>
<dbReference type="PANTHER" id="PTHR22914">
    <property type="entry name" value="CHITIN SYNTHASE"/>
    <property type="match status" value="1"/>
</dbReference>
<dbReference type="PANTHER" id="PTHR22914:SF45">
    <property type="entry name" value="CHITIN SYNTHASE"/>
    <property type="match status" value="1"/>
</dbReference>
<dbReference type="Pfam" id="PF03142">
    <property type="entry name" value="Chitin_synth_2"/>
    <property type="match status" value="1"/>
</dbReference>
<dbReference type="Pfam" id="PF00173">
    <property type="entry name" value="Cyt-b5"/>
    <property type="match status" value="1"/>
</dbReference>
<dbReference type="Pfam" id="PF08766">
    <property type="entry name" value="DEK_C"/>
    <property type="match status" value="1"/>
</dbReference>
<dbReference type="Pfam" id="PF00063">
    <property type="entry name" value="Myosin_head"/>
    <property type="match status" value="1"/>
</dbReference>
<dbReference type="SMART" id="SM01117">
    <property type="entry name" value="Cyt-b5"/>
    <property type="match status" value="2"/>
</dbReference>
<dbReference type="SMART" id="SM00242">
    <property type="entry name" value="MYSc"/>
    <property type="match status" value="1"/>
</dbReference>
<dbReference type="SUPFAM" id="SSF55856">
    <property type="entry name" value="Cytochrome b5-like heme/steroid binding domain"/>
    <property type="match status" value="1"/>
</dbReference>
<dbReference type="SUPFAM" id="SSF109715">
    <property type="entry name" value="DEK C-terminal domain"/>
    <property type="match status" value="1"/>
</dbReference>
<dbReference type="SUPFAM" id="SSF53448">
    <property type="entry name" value="Nucleotide-diphospho-sugar transferases"/>
    <property type="match status" value="1"/>
</dbReference>
<dbReference type="SUPFAM" id="SSF52540">
    <property type="entry name" value="P-loop containing nucleoside triphosphate hydrolases"/>
    <property type="match status" value="1"/>
</dbReference>
<dbReference type="PROSITE" id="PS50255">
    <property type="entry name" value="CYTOCHROME_B5_2"/>
    <property type="match status" value="1"/>
</dbReference>
<dbReference type="PROSITE" id="PS51998">
    <property type="entry name" value="DEK_C"/>
    <property type="match status" value="1"/>
</dbReference>
<dbReference type="PROSITE" id="PS51456">
    <property type="entry name" value="MYOSIN_MOTOR"/>
    <property type="match status" value="1"/>
</dbReference>
<proteinExistence type="evidence at protein level"/>
<organism>
    <name type="scientific">Exophiala dermatitidis (strain ATCC 34100 / CBS 525.76 / NIH/UT8656)</name>
    <name type="common">Black yeast</name>
    <name type="synonym">Wangiella dermatitidis</name>
    <dbReference type="NCBI Taxonomy" id="858893"/>
    <lineage>
        <taxon>Eukaryota</taxon>
        <taxon>Fungi</taxon>
        <taxon>Dikarya</taxon>
        <taxon>Ascomycota</taxon>
        <taxon>Pezizomycotina</taxon>
        <taxon>Eurotiomycetes</taxon>
        <taxon>Chaetothyriomycetidae</taxon>
        <taxon>Chaetothyriales</taxon>
        <taxon>Herpotrichiellaceae</taxon>
        <taxon>Exophiala</taxon>
    </lineage>
</organism>